<evidence type="ECO:0000255" key="1">
    <source>
        <dbReference type="HAMAP-Rule" id="MF_00392"/>
    </source>
</evidence>
<protein>
    <recommendedName>
        <fullName evidence="1">Lipid-A-disaccharide synthase</fullName>
        <ecNumber evidence="1">2.4.1.182</ecNumber>
    </recommendedName>
</protein>
<name>LPXB_RHOPB</name>
<keyword id="KW-0328">Glycosyltransferase</keyword>
<keyword id="KW-0441">Lipid A biosynthesis</keyword>
<keyword id="KW-0444">Lipid biosynthesis</keyword>
<keyword id="KW-0443">Lipid metabolism</keyword>
<keyword id="KW-0808">Transferase</keyword>
<gene>
    <name evidence="1" type="primary">lpxB</name>
    <name type="ordered locus">RPC_2449</name>
</gene>
<dbReference type="EC" id="2.4.1.182" evidence="1"/>
<dbReference type="EMBL" id="CP000301">
    <property type="protein sequence ID" value="ABD88000.1"/>
    <property type="molecule type" value="Genomic_DNA"/>
</dbReference>
<dbReference type="SMR" id="Q215D6"/>
<dbReference type="STRING" id="316056.RPC_2449"/>
<dbReference type="CAZy" id="GT19">
    <property type="family name" value="Glycosyltransferase Family 19"/>
</dbReference>
<dbReference type="KEGG" id="rpc:RPC_2449"/>
<dbReference type="eggNOG" id="COG0763">
    <property type="taxonomic scope" value="Bacteria"/>
</dbReference>
<dbReference type="HOGENOM" id="CLU_036577_3_0_5"/>
<dbReference type="OrthoDB" id="9801642at2"/>
<dbReference type="UniPathway" id="UPA00973"/>
<dbReference type="GO" id="GO:0016020">
    <property type="term" value="C:membrane"/>
    <property type="evidence" value="ECO:0007669"/>
    <property type="project" value="GOC"/>
</dbReference>
<dbReference type="GO" id="GO:0008915">
    <property type="term" value="F:lipid-A-disaccharide synthase activity"/>
    <property type="evidence" value="ECO:0007669"/>
    <property type="project" value="UniProtKB-UniRule"/>
</dbReference>
<dbReference type="GO" id="GO:0005543">
    <property type="term" value="F:phospholipid binding"/>
    <property type="evidence" value="ECO:0007669"/>
    <property type="project" value="TreeGrafter"/>
</dbReference>
<dbReference type="GO" id="GO:0009245">
    <property type="term" value="P:lipid A biosynthetic process"/>
    <property type="evidence" value="ECO:0007669"/>
    <property type="project" value="UniProtKB-UniRule"/>
</dbReference>
<dbReference type="Gene3D" id="3.40.50.2000">
    <property type="entry name" value="Glycogen Phosphorylase B"/>
    <property type="match status" value="1"/>
</dbReference>
<dbReference type="HAMAP" id="MF_00392">
    <property type="entry name" value="LpxB"/>
    <property type="match status" value="1"/>
</dbReference>
<dbReference type="InterPro" id="IPR003835">
    <property type="entry name" value="Glyco_trans_19"/>
</dbReference>
<dbReference type="NCBIfam" id="TIGR00215">
    <property type="entry name" value="lpxB"/>
    <property type="match status" value="1"/>
</dbReference>
<dbReference type="PANTHER" id="PTHR30372">
    <property type="entry name" value="LIPID-A-DISACCHARIDE SYNTHASE"/>
    <property type="match status" value="1"/>
</dbReference>
<dbReference type="PANTHER" id="PTHR30372:SF4">
    <property type="entry name" value="LIPID-A-DISACCHARIDE SYNTHASE, MITOCHONDRIAL-RELATED"/>
    <property type="match status" value="1"/>
</dbReference>
<dbReference type="Pfam" id="PF02684">
    <property type="entry name" value="LpxB"/>
    <property type="match status" value="1"/>
</dbReference>
<dbReference type="SUPFAM" id="SSF53756">
    <property type="entry name" value="UDP-Glycosyltransferase/glycogen phosphorylase"/>
    <property type="match status" value="1"/>
</dbReference>
<organism>
    <name type="scientific">Rhodopseudomonas palustris (strain BisB18)</name>
    <dbReference type="NCBI Taxonomy" id="316056"/>
    <lineage>
        <taxon>Bacteria</taxon>
        <taxon>Pseudomonadati</taxon>
        <taxon>Pseudomonadota</taxon>
        <taxon>Alphaproteobacteria</taxon>
        <taxon>Hyphomicrobiales</taxon>
        <taxon>Nitrobacteraceae</taxon>
        <taxon>Rhodopseudomonas</taxon>
    </lineage>
</organism>
<reference key="1">
    <citation type="submission" date="2006-03" db="EMBL/GenBank/DDBJ databases">
        <title>Complete sequence of Rhodopseudomonas palustris BisB18.</title>
        <authorList>
            <consortium name="US DOE Joint Genome Institute"/>
            <person name="Copeland A."/>
            <person name="Lucas S."/>
            <person name="Lapidus A."/>
            <person name="Barry K."/>
            <person name="Detter J.C."/>
            <person name="Glavina del Rio T."/>
            <person name="Hammon N."/>
            <person name="Israni S."/>
            <person name="Dalin E."/>
            <person name="Tice H."/>
            <person name="Pitluck S."/>
            <person name="Chain P."/>
            <person name="Malfatti S."/>
            <person name="Shin M."/>
            <person name="Vergez L."/>
            <person name="Schmutz J."/>
            <person name="Larimer F."/>
            <person name="Land M."/>
            <person name="Hauser L."/>
            <person name="Pelletier D.A."/>
            <person name="Kyrpides N."/>
            <person name="Anderson I."/>
            <person name="Oda Y."/>
            <person name="Harwood C.S."/>
            <person name="Richardson P."/>
        </authorList>
    </citation>
    <scope>NUCLEOTIDE SEQUENCE [LARGE SCALE GENOMIC DNA]</scope>
    <source>
        <strain>BisB18</strain>
    </source>
</reference>
<sequence>MTAVATHAVRKIFLIATEESGDRLGASLMRELRDRLGAAVRFEGVGGRAMAREGLTSLFPIEELSIIGLSAVARRLPTILRHIRTAAHAALQAAPDVLVIIDSPDFTHRVARRVRARDPSIPIVNYVSPTVWAWRPGRAKVMRKYVDHVLALLPFEPDEYRRLQGPPCSYVGHPLTEQIATLRPNPEEQLRRDAAPPVLLVLPGSRRSEIRHHMAVFGEALGLLQAQGVAFELILPTMPHLEALIAEALKHWPLQPRVVVGENDKRAAFRIARAALAKSGTVTLELAVAGVPMVTAYRAGQLEAWIVRRRITSASVILANLVVGENVAPEYLQEECTAPTLAAALRDVLADSPLRQRQLAAFGRIDAIMSTGAQSPSACAADIVLGLLPAAAPALR</sequence>
<feature type="chain" id="PRO_0000255215" description="Lipid-A-disaccharide synthase">
    <location>
        <begin position="1"/>
        <end position="396"/>
    </location>
</feature>
<accession>Q215D6</accession>
<comment type="function">
    <text evidence="1">Condensation of UDP-2,3-diacylglucosamine and 2,3-diacylglucosamine-1-phosphate to form lipid A disaccharide, a precursor of lipid A, a phosphorylated glycolipid that anchors the lipopolysaccharide to the outer membrane of the cell.</text>
</comment>
<comment type="catalytic activity">
    <reaction evidence="1">
        <text>a lipid X + a UDP-2-N,3-O-bis[(3R)-3-hydroxyacyl]-alpha-D-glucosamine = a lipid A disaccharide + UDP + H(+)</text>
        <dbReference type="Rhea" id="RHEA:67828"/>
        <dbReference type="ChEBI" id="CHEBI:15378"/>
        <dbReference type="ChEBI" id="CHEBI:58223"/>
        <dbReference type="ChEBI" id="CHEBI:137748"/>
        <dbReference type="ChEBI" id="CHEBI:176338"/>
        <dbReference type="ChEBI" id="CHEBI:176343"/>
        <dbReference type="EC" id="2.4.1.182"/>
    </reaction>
</comment>
<comment type="pathway">
    <text evidence="1">Bacterial outer membrane biogenesis; LPS lipid A biosynthesis.</text>
</comment>
<comment type="similarity">
    <text evidence="1">Belongs to the LpxB family.</text>
</comment>
<proteinExistence type="inferred from homology"/>